<dbReference type="EMBL" id="AE005673">
    <property type="protein sequence ID" value="AAK22752.1"/>
    <property type="molecule type" value="Genomic_DNA"/>
</dbReference>
<dbReference type="PIR" id="D87344">
    <property type="entry name" value="D87344"/>
</dbReference>
<dbReference type="RefSeq" id="NP_419584.1">
    <property type="nucleotide sequence ID" value="NC_002696.2"/>
</dbReference>
<dbReference type="RefSeq" id="WP_010918653.1">
    <property type="nucleotide sequence ID" value="NC_002696.2"/>
</dbReference>
<dbReference type="SMR" id="Q9AA40"/>
<dbReference type="STRING" id="190650.CC_0767"/>
<dbReference type="EnsemblBacteria" id="AAK22752">
    <property type="protein sequence ID" value="AAK22752"/>
    <property type="gene ID" value="CC_0767"/>
</dbReference>
<dbReference type="KEGG" id="ccr:CC_0767"/>
<dbReference type="PATRIC" id="fig|190650.5.peg.778"/>
<dbReference type="eggNOG" id="COG0706">
    <property type="taxonomic scope" value="Bacteria"/>
</dbReference>
<dbReference type="HOGENOM" id="CLU_016535_1_0_5"/>
<dbReference type="BioCyc" id="CAULO:CC0767-MONOMER"/>
<dbReference type="Proteomes" id="UP000001816">
    <property type="component" value="Chromosome"/>
</dbReference>
<dbReference type="GO" id="GO:0005886">
    <property type="term" value="C:plasma membrane"/>
    <property type="evidence" value="ECO:0007669"/>
    <property type="project" value="UniProtKB-SubCell"/>
</dbReference>
<dbReference type="GO" id="GO:0032977">
    <property type="term" value="F:membrane insertase activity"/>
    <property type="evidence" value="ECO:0007669"/>
    <property type="project" value="InterPro"/>
</dbReference>
<dbReference type="GO" id="GO:0051205">
    <property type="term" value="P:protein insertion into membrane"/>
    <property type="evidence" value="ECO:0007669"/>
    <property type="project" value="TreeGrafter"/>
</dbReference>
<dbReference type="GO" id="GO:0015031">
    <property type="term" value="P:protein transport"/>
    <property type="evidence" value="ECO:0007669"/>
    <property type="project" value="UniProtKB-KW"/>
</dbReference>
<dbReference type="CDD" id="cd20070">
    <property type="entry name" value="5TM_YidC_Alb3"/>
    <property type="match status" value="1"/>
</dbReference>
<dbReference type="CDD" id="cd19961">
    <property type="entry name" value="EcYidC-like_peri"/>
    <property type="match status" value="1"/>
</dbReference>
<dbReference type="Gene3D" id="2.70.98.90">
    <property type="match status" value="1"/>
</dbReference>
<dbReference type="HAMAP" id="MF_01810">
    <property type="entry name" value="YidC_type1"/>
    <property type="match status" value="1"/>
</dbReference>
<dbReference type="InterPro" id="IPR019998">
    <property type="entry name" value="Membr_insert_YidC"/>
</dbReference>
<dbReference type="InterPro" id="IPR028053">
    <property type="entry name" value="Membr_insert_YidC_N"/>
</dbReference>
<dbReference type="InterPro" id="IPR001708">
    <property type="entry name" value="YidC/ALB3/OXA1/COX18"/>
</dbReference>
<dbReference type="InterPro" id="IPR028055">
    <property type="entry name" value="YidC/Oxa/ALB_C"/>
</dbReference>
<dbReference type="InterPro" id="IPR047196">
    <property type="entry name" value="YidC_ALB_C"/>
</dbReference>
<dbReference type="InterPro" id="IPR038221">
    <property type="entry name" value="YidC_periplasmic_sf"/>
</dbReference>
<dbReference type="NCBIfam" id="NF002353">
    <property type="entry name" value="PRK01318.1-4"/>
    <property type="match status" value="1"/>
</dbReference>
<dbReference type="NCBIfam" id="TIGR03593">
    <property type="entry name" value="yidC_nterm"/>
    <property type="match status" value="1"/>
</dbReference>
<dbReference type="NCBIfam" id="TIGR03592">
    <property type="entry name" value="yidC_oxa1_cterm"/>
    <property type="match status" value="1"/>
</dbReference>
<dbReference type="PANTHER" id="PTHR12428:SF65">
    <property type="entry name" value="CYTOCHROME C OXIDASE ASSEMBLY PROTEIN COX18, MITOCHONDRIAL"/>
    <property type="match status" value="1"/>
</dbReference>
<dbReference type="PANTHER" id="PTHR12428">
    <property type="entry name" value="OXA1"/>
    <property type="match status" value="1"/>
</dbReference>
<dbReference type="Pfam" id="PF02096">
    <property type="entry name" value="60KD_IMP"/>
    <property type="match status" value="1"/>
</dbReference>
<dbReference type="Pfam" id="PF14849">
    <property type="entry name" value="YidC_periplas"/>
    <property type="match status" value="1"/>
</dbReference>
<dbReference type="PRINTS" id="PR00701">
    <property type="entry name" value="60KDINNERMP"/>
</dbReference>
<dbReference type="PRINTS" id="PR01900">
    <property type="entry name" value="YIDCPROTEIN"/>
</dbReference>
<accession>Q9AA40</accession>
<feature type="chain" id="PRO_0000124702" description="Membrane protein insertase YidC">
    <location>
        <begin position="1"/>
        <end position="615"/>
    </location>
</feature>
<feature type="transmembrane region" description="Helical" evidence="1">
    <location>
        <begin position="9"/>
        <end position="29"/>
    </location>
</feature>
<feature type="transmembrane region" description="Helical" evidence="1">
    <location>
        <begin position="384"/>
        <end position="404"/>
    </location>
</feature>
<feature type="transmembrane region" description="Helical" evidence="1">
    <location>
        <begin position="458"/>
        <end position="478"/>
    </location>
</feature>
<feature type="transmembrane region" description="Helical" evidence="1">
    <location>
        <begin position="516"/>
        <end position="536"/>
    </location>
</feature>
<feature type="transmembrane region" description="Helical" evidence="1">
    <location>
        <begin position="556"/>
        <end position="576"/>
    </location>
</feature>
<proteinExistence type="inferred from homology"/>
<protein>
    <recommendedName>
        <fullName evidence="1">Membrane protein insertase YidC</fullName>
    </recommendedName>
    <alternativeName>
        <fullName evidence="1">Foldase YidC</fullName>
    </alternativeName>
    <alternativeName>
        <fullName evidence="1">Membrane integrase YidC</fullName>
    </alternativeName>
    <alternativeName>
        <fullName evidence="1">Membrane protein YidC</fullName>
    </alternativeName>
</protein>
<name>YIDC_CAUVC</name>
<reference key="1">
    <citation type="journal article" date="2001" name="Proc. Natl. Acad. Sci. U.S.A.">
        <title>Complete genome sequence of Caulobacter crescentus.</title>
        <authorList>
            <person name="Nierman W.C."/>
            <person name="Feldblyum T.V."/>
            <person name="Laub M.T."/>
            <person name="Paulsen I.T."/>
            <person name="Nelson K.E."/>
            <person name="Eisen J.A."/>
            <person name="Heidelberg J.F."/>
            <person name="Alley M.R.K."/>
            <person name="Ohta N."/>
            <person name="Maddock J.R."/>
            <person name="Potocka I."/>
            <person name="Nelson W.C."/>
            <person name="Newton A."/>
            <person name="Stephens C."/>
            <person name="Phadke N.D."/>
            <person name="Ely B."/>
            <person name="DeBoy R.T."/>
            <person name="Dodson R.J."/>
            <person name="Durkin A.S."/>
            <person name="Gwinn M.L."/>
            <person name="Haft D.H."/>
            <person name="Kolonay J.F."/>
            <person name="Smit J."/>
            <person name="Craven M.B."/>
            <person name="Khouri H.M."/>
            <person name="Shetty J."/>
            <person name="Berry K.J."/>
            <person name="Utterback T.R."/>
            <person name="Tran K."/>
            <person name="Wolf A.M."/>
            <person name="Vamathevan J.J."/>
            <person name="Ermolaeva M.D."/>
            <person name="White O."/>
            <person name="Salzberg S.L."/>
            <person name="Venter J.C."/>
            <person name="Shapiro L."/>
            <person name="Fraser C.M."/>
        </authorList>
    </citation>
    <scope>NUCLEOTIDE SEQUENCE [LARGE SCALE GENOMIC DNA]</scope>
    <source>
        <strain>ATCC 19089 / CIP 103742 / CB 15</strain>
    </source>
</reference>
<sequence>MQNDNKNTLMFIVSAFAILIGYQFFVLGPQQKKAEAEFRAKKAAEQQSAAKAGVTLDANGNPAPLRLSRDAAKALSPRIEVDTPALSGSIALKGARIDDLFLRKYDETTKKDSPPVELFRPEGAEHAWFADFGWAGANLPGLPDSRTVWTAAPGQVLRPNSPVTLTYDNGLGLTFTRVIAVDDQAMFTVTDSVKNNGTNGLQLAPYATVQRQGISDALGKNQIVHEGAIGVLGATDEQKLEMAKYGKWKKDKPLQSFDSVGGWTGITDKYWLAALIPGQNQAIKAQYRVTNVAGIDVYDVNFLGPVQVLNPGATVSQTTRLFAGAKTVPLLRKYEYGATPAPAIWEFWNKTKAEIPRFDDAVDWGMFRFFTRPIFNILEVFYKLVGNFGLAILLLTVVLKLVLYPMADKSYESMAKMKKIAPEVEKLKAKHKDDPAKQQQEMMALYQKEKINPMMGCLPMLIQIPVFYALYKVLTVTIEMRHAPFFGWIQDLSAPDPTTMFNLFGLIPWDPGSLPLIGAMIAHLGVWPLLYGFTMWLTTAMNPPAGDPIQQKIFQWFPVIFTFTLSGFAVGLVIYWCWSNVLTIFQQYIIMRRYKVENPIDQIIARLRGKTAGAT</sequence>
<evidence type="ECO:0000255" key="1">
    <source>
        <dbReference type="HAMAP-Rule" id="MF_01810"/>
    </source>
</evidence>
<gene>
    <name evidence="1" type="primary">yidC</name>
    <name type="ordered locus">CC_0767</name>
</gene>
<keyword id="KW-0997">Cell inner membrane</keyword>
<keyword id="KW-1003">Cell membrane</keyword>
<keyword id="KW-0143">Chaperone</keyword>
<keyword id="KW-0472">Membrane</keyword>
<keyword id="KW-0653">Protein transport</keyword>
<keyword id="KW-1185">Reference proteome</keyword>
<keyword id="KW-0812">Transmembrane</keyword>
<keyword id="KW-1133">Transmembrane helix</keyword>
<keyword id="KW-0813">Transport</keyword>
<organism>
    <name type="scientific">Caulobacter vibrioides (strain ATCC 19089 / CIP 103742 / CB 15)</name>
    <name type="common">Caulobacter crescentus</name>
    <dbReference type="NCBI Taxonomy" id="190650"/>
    <lineage>
        <taxon>Bacteria</taxon>
        <taxon>Pseudomonadati</taxon>
        <taxon>Pseudomonadota</taxon>
        <taxon>Alphaproteobacteria</taxon>
        <taxon>Caulobacterales</taxon>
        <taxon>Caulobacteraceae</taxon>
        <taxon>Caulobacter</taxon>
    </lineage>
</organism>
<comment type="function">
    <text evidence="1">Required for the insertion and/or proper folding and/or complex formation of integral membrane proteins into the membrane. Involved in integration of membrane proteins that insert both dependently and independently of the Sec translocase complex, as well as at least some lipoproteins. Aids folding of multispanning membrane proteins.</text>
</comment>
<comment type="subunit">
    <text evidence="1">Interacts with the Sec translocase complex via SecD. Specifically interacts with transmembrane segments of nascent integral membrane proteins during membrane integration.</text>
</comment>
<comment type="subcellular location">
    <subcellularLocation>
        <location evidence="1">Cell inner membrane</location>
        <topology evidence="1">Multi-pass membrane protein</topology>
    </subcellularLocation>
</comment>
<comment type="similarity">
    <text evidence="1">Belongs to the OXA1/ALB3/YidC family. Type 1 subfamily.</text>
</comment>